<keyword id="KW-0067">ATP-binding</keyword>
<keyword id="KW-0145">Chemotaxis</keyword>
<keyword id="KW-0963">Cytoplasm</keyword>
<keyword id="KW-0206">Cytoskeleton</keyword>
<keyword id="KW-0418">Kinase</keyword>
<keyword id="KW-0460">Magnesium</keyword>
<keyword id="KW-0479">Metal-binding</keyword>
<keyword id="KW-0547">Nucleotide-binding</keyword>
<keyword id="KW-0597">Phosphoprotein</keyword>
<keyword id="KW-1185">Reference proteome</keyword>
<keyword id="KW-0723">Serine/threonine-protein kinase</keyword>
<keyword id="KW-0808">Transferase</keyword>
<gene>
    <name type="primary">pakA</name>
    <name type="ORF">DDB_G0269166</name>
</gene>
<sequence>MEEKPKSTTPPPSVSSLRQKFEQFLDKTDKGFNATRNNYRGPVSSSTGIINDKEKKSHSYFKVREEGSNKRPSSFSASNPITPSSPQSTHSSPIYRGVGYHQYSSVNSGNSYSGSGNNINNIINNSNNSNSNNLYGNNSNNQSSGSLGNFLIDKLEYSAATVTASDLKRERQQLFRNKEEFTMESSSYGGSTIGDDDLDSLNGSSSQQFNHRNSSWADRRERFIKKVMNGQFNEVQMRDELNRLRDIEADKIRAEERRTPSMNMDEFKAIEIERLRKKIYQEELVIFRQEEIEKIQREERIKIEKEYDDKSIISSQERQHIVQQIINQKEDEKGSSPPFPIPLVVNNNNNENNENDNNNNNNNNNNNNNNNNNNNNNNNKNIDLTSFNNNININSNNNEIKNNVIVDSDDEEELERLEQLRRQREIERLREEEEENEDRVERELASRRRQEEDRIKREEEEEEEEQRNYLRRLKELERIKQIEEEEEEERERQSQLQSSQQQQKSSSTQRSSNTVTSTSSSSTGGDSNPSTSQKPTNLLNLMGSNNNISNINTNILSHSIVNSSGGLPPPPPTASHVDNRSRSHTLAGESHSSENTPLVSSIDNNGVNNKMSRSHSGGALSGLALPTAPPLPNQPNVNNSNNNNNNNNINNNHNHSHNHSNNLHQSALKNSSSMSTPSISPSQAGNSATSTVPSSPISASTSMSSPTLVVSPRKDELTTSTGSTRKGSISEREDKKKVSSSSTSSSSSSNGGLSSSGKDHKKDHSSEEKEKEKKSFFNKLFSKEKKDHHSSSKSPSSGSSGGGEVDEKKKKKLSPRVGTPFNVKHDVHVNFNADTGFEGLPKEWEVLIKSNFQEPEVMQHPEEVLDVVKFHAQYQGLASAPAMHAPSIPLTDEPPVTLNDLISLDDPKKIYYNINKIGEGGAGEVFEAINSRTNQTIAIKKMKLKAQNLKTVINEIGMMKNSNHENIVQYIDSYIVADELWVAMEFMSGGCLTEVLDQYRDIQLNESQIAFVCQEVLRGLEYIHKFNRIHRDIKSDNILIGANGEIKLADFGYAAQLTQIRQERNSVVGTPYWMAPELIRGNNYDFKVDVWSLGIMTREMAEGEPPYLEFPPLRALFLLTTQGLPPIRDAHKWSKEFNDFLALCLEKDTEKRASSSSLLHHPFLKRACSGPEFYKAVDAARIEKENQLQNFANLTAI</sequence>
<accession>Q55D99</accession>
<accession>Q23866</accession>
<accession>Q9XYY3</accession>
<name>PAKA_DICDI</name>
<organism>
    <name type="scientific">Dictyostelium discoideum</name>
    <name type="common">Social amoeba</name>
    <dbReference type="NCBI Taxonomy" id="44689"/>
    <lineage>
        <taxon>Eukaryota</taxon>
        <taxon>Amoebozoa</taxon>
        <taxon>Evosea</taxon>
        <taxon>Eumycetozoa</taxon>
        <taxon>Dictyostelia</taxon>
        <taxon>Dictyosteliales</taxon>
        <taxon>Dictyosteliaceae</taxon>
        <taxon>Dictyostelium</taxon>
    </lineage>
</organism>
<dbReference type="EC" id="2.7.11.1"/>
<dbReference type="EMBL" id="AF131221">
    <property type="protein sequence ID" value="AAD28470.1"/>
    <property type="molecule type" value="mRNA"/>
</dbReference>
<dbReference type="EMBL" id="U51923">
    <property type="protein sequence ID" value="AAA93038.2"/>
    <property type="molecule type" value="mRNA"/>
</dbReference>
<dbReference type="EMBL" id="AAFI02000005">
    <property type="protein sequence ID" value="EAL71933.1"/>
    <property type="molecule type" value="Genomic_DNA"/>
</dbReference>
<dbReference type="RefSeq" id="XP_646232.1">
    <property type="nucleotide sequence ID" value="XM_641140.1"/>
</dbReference>
<dbReference type="SMR" id="Q55D99"/>
<dbReference type="BioGRID" id="1242191">
    <property type="interactions" value="1"/>
</dbReference>
<dbReference type="FunCoup" id="Q55D99">
    <property type="interactions" value="495"/>
</dbReference>
<dbReference type="STRING" id="44689.Q55D99"/>
<dbReference type="GlyGen" id="Q55D99">
    <property type="glycosylation" value="3 sites"/>
</dbReference>
<dbReference type="iPTMnet" id="Q55D99"/>
<dbReference type="PaxDb" id="44689-DDB0191313"/>
<dbReference type="EnsemblProtists" id="EAL71933">
    <property type="protein sequence ID" value="EAL71933"/>
    <property type="gene ID" value="DDB_G0269166"/>
</dbReference>
<dbReference type="GeneID" id="8617188"/>
<dbReference type="KEGG" id="ddi:DDB_G0269166"/>
<dbReference type="dictyBase" id="DDB_G0269166">
    <property type="gene designation" value="pakA"/>
</dbReference>
<dbReference type="VEuPathDB" id="AmoebaDB:DDB_G0269166"/>
<dbReference type="eggNOG" id="KOG0578">
    <property type="taxonomic scope" value="Eukaryota"/>
</dbReference>
<dbReference type="HOGENOM" id="CLU_271206_0_0_1"/>
<dbReference type="InParanoid" id="Q55D99"/>
<dbReference type="OMA" id="HRMRRAF"/>
<dbReference type="Reactome" id="R-DDI-389359">
    <property type="pathway name" value="CD28 dependent Vav1 pathway"/>
</dbReference>
<dbReference type="Reactome" id="R-DDI-5627123">
    <property type="pathway name" value="RHO GTPases activate PAKs"/>
</dbReference>
<dbReference type="Reactome" id="R-DDI-5687128">
    <property type="pathway name" value="MAPK6/MAPK4 signaling"/>
</dbReference>
<dbReference type="Reactome" id="R-DDI-9013149">
    <property type="pathway name" value="RAC1 GTPase cycle"/>
</dbReference>
<dbReference type="Reactome" id="R-DDI-9013404">
    <property type="pathway name" value="RAC2 GTPase cycle"/>
</dbReference>
<dbReference type="Reactome" id="R-DDI-9013406">
    <property type="pathway name" value="RHOQ GTPase cycle"/>
</dbReference>
<dbReference type="Reactome" id="R-DDI-9013407">
    <property type="pathway name" value="RHOH GTPase cycle"/>
</dbReference>
<dbReference type="Reactome" id="R-DDI-9013408">
    <property type="pathway name" value="RHOG GTPase cycle"/>
</dbReference>
<dbReference type="Reactome" id="R-DDI-9013420">
    <property type="pathway name" value="RHOU GTPase cycle"/>
</dbReference>
<dbReference type="Reactome" id="R-DDI-9013423">
    <property type="pathway name" value="RAC3 GTPase cycle"/>
</dbReference>
<dbReference type="Reactome" id="R-DDI-9013424">
    <property type="pathway name" value="RHOV GTPase cycle"/>
</dbReference>
<dbReference type="PRO" id="PR:Q55D99"/>
<dbReference type="Proteomes" id="UP000002195">
    <property type="component" value="Chromosome 1"/>
</dbReference>
<dbReference type="GO" id="GO:0005938">
    <property type="term" value="C:cell cortex"/>
    <property type="evidence" value="ECO:0000314"/>
    <property type="project" value="dictyBase"/>
</dbReference>
<dbReference type="GO" id="GO:0031254">
    <property type="term" value="C:cell trailing edge"/>
    <property type="evidence" value="ECO:0000314"/>
    <property type="project" value="dictyBase"/>
</dbReference>
<dbReference type="GO" id="GO:0032154">
    <property type="term" value="C:cleavage furrow"/>
    <property type="evidence" value="ECO:0000314"/>
    <property type="project" value="dictyBase"/>
</dbReference>
<dbReference type="GO" id="GO:0030863">
    <property type="term" value="C:cortical cytoskeleton"/>
    <property type="evidence" value="ECO:0000314"/>
    <property type="project" value="dictyBase"/>
</dbReference>
<dbReference type="GO" id="GO:0005737">
    <property type="term" value="C:cytoplasm"/>
    <property type="evidence" value="ECO:0000318"/>
    <property type="project" value="GO_Central"/>
</dbReference>
<dbReference type="GO" id="GO:0005856">
    <property type="term" value="C:cytoskeleton"/>
    <property type="evidence" value="ECO:0000314"/>
    <property type="project" value="UniProtKB"/>
</dbReference>
<dbReference type="GO" id="GO:0005829">
    <property type="term" value="C:cytosol"/>
    <property type="evidence" value="ECO:0007669"/>
    <property type="project" value="UniProtKB-SubCell"/>
</dbReference>
<dbReference type="GO" id="GO:0097204">
    <property type="term" value="C:phagocytic cup base"/>
    <property type="evidence" value="ECO:0000314"/>
    <property type="project" value="dictyBase"/>
</dbReference>
<dbReference type="GO" id="GO:0061803">
    <property type="term" value="C:posterior cell cortex"/>
    <property type="evidence" value="ECO:0000314"/>
    <property type="project" value="dictyBase"/>
</dbReference>
<dbReference type="GO" id="GO:0001931">
    <property type="term" value="C:uropod"/>
    <property type="evidence" value="ECO:0000314"/>
    <property type="project" value="dictyBase"/>
</dbReference>
<dbReference type="GO" id="GO:0005524">
    <property type="term" value="F:ATP binding"/>
    <property type="evidence" value="ECO:0007669"/>
    <property type="project" value="UniProtKB-KW"/>
</dbReference>
<dbReference type="GO" id="GO:0046872">
    <property type="term" value="F:metal ion binding"/>
    <property type="evidence" value="ECO:0007669"/>
    <property type="project" value="UniProtKB-KW"/>
</dbReference>
<dbReference type="GO" id="GO:0045159">
    <property type="term" value="F:myosin II binding"/>
    <property type="evidence" value="ECO:0000315"/>
    <property type="project" value="UniProtKB"/>
</dbReference>
<dbReference type="GO" id="GO:0106310">
    <property type="term" value="F:protein serine kinase activity"/>
    <property type="evidence" value="ECO:0007669"/>
    <property type="project" value="RHEA"/>
</dbReference>
<dbReference type="GO" id="GO:0004674">
    <property type="term" value="F:protein serine/threonine kinase activity"/>
    <property type="evidence" value="ECO:0000314"/>
    <property type="project" value="dictyBase"/>
</dbReference>
<dbReference type="GO" id="GO:0031152">
    <property type="term" value="P:aggregation involved in sorocarp development"/>
    <property type="evidence" value="ECO:0000315"/>
    <property type="project" value="dictyBase"/>
</dbReference>
<dbReference type="GO" id="GO:0048870">
    <property type="term" value="P:cell motility"/>
    <property type="evidence" value="ECO:0000315"/>
    <property type="project" value="dictyBase"/>
</dbReference>
<dbReference type="GO" id="GO:0009267">
    <property type="term" value="P:cellular response to starvation"/>
    <property type="evidence" value="ECO:0000318"/>
    <property type="project" value="GO_Central"/>
</dbReference>
<dbReference type="GO" id="GO:0006935">
    <property type="term" value="P:chemotaxis"/>
    <property type="evidence" value="ECO:0000315"/>
    <property type="project" value="dictyBase"/>
</dbReference>
<dbReference type="GO" id="GO:0043327">
    <property type="term" value="P:chemotaxis to cAMP"/>
    <property type="evidence" value="ECO:0000315"/>
    <property type="project" value="UniProtKB"/>
</dbReference>
<dbReference type="GO" id="GO:0030010">
    <property type="term" value="P:establishment of cell polarity"/>
    <property type="evidence" value="ECO:0000316"/>
    <property type="project" value="dictyBase"/>
</dbReference>
<dbReference type="GO" id="GO:0007163">
    <property type="term" value="P:establishment or maintenance of cell polarity"/>
    <property type="evidence" value="ECO:0000304"/>
    <property type="project" value="dictyBase"/>
</dbReference>
<dbReference type="GO" id="GO:0035556">
    <property type="term" value="P:intracellular signal transduction"/>
    <property type="evidence" value="ECO:0000318"/>
    <property type="project" value="GO_Central"/>
</dbReference>
<dbReference type="GO" id="GO:0000281">
    <property type="term" value="P:mitotic cytokinesis"/>
    <property type="evidence" value="ECO:0000315"/>
    <property type="project" value="dictyBase"/>
</dbReference>
<dbReference type="GO" id="GO:0031036">
    <property type="term" value="P:myosin II filament assembly"/>
    <property type="evidence" value="ECO:0000315"/>
    <property type="project" value="dictyBase"/>
</dbReference>
<dbReference type="GO" id="GO:0006909">
    <property type="term" value="P:phagocytosis"/>
    <property type="evidence" value="ECO:0000315"/>
    <property type="project" value="dictyBase"/>
</dbReference>
<dbReference type="GO" id="GO:0032467">
    <property type="term" value="P:positive regulation of cytokinesis"/>
    <property type="evidence" value="ECO:0000315"/>
    <property type="project" value="UniProtKB"/>
</dbReference>
<dbReference type="GO" id="GO:0043408">
    <property type="term" value="P:regulation of MAPK cascade"/>
    <property type="evidence" value="ECO:0000318"/>
    <property type="project" value="GO_Central"/>
</dbReference>
<dbReference type="GO" id="GO:0031156">
    <property type="term" value="P:regulation of sorocarp development"/>
    <property type="evidence" value="ECO:0000315"/>
    <property type="project" value="dictyBase"/>
</dbReference>
<dbReference type="GO" id="GO:1903013">
    <property type="term" value="P:response to differentiation-inducing factor 1"/>
    <property type="evidence" value="ECO:0007005"/>
    <property type="project" value="dictyBase"/>
</dbReference>
<dbReference type="CDD" id="cd01093">
    <property type="entry name" value="CRIB_PAK_like"/>
    <property type="match status" value="1"/>
</dbReference>
<dbReference type="CDD" id="cd06614">
    <property type="entry name" value="STKc_PAK"/>
    <property type="match status" value="1"/>
</dbReference>
<dbReference type="FunFam" id="1.10.510.10:FF:000802">
    <property type="entry name" value="Serine/threonine protein kinase"/>
    <property type="match status" value="1"/>
</dbReference>
<dbReference type="Gene3D" id="3.90.810.10">
    <property type="entry name" value="CRIB domain"/>
    <property type="match status" value="1"/>
</dbReference>
<dbReference type="Gene3D" id="1.10.510.10">
    <property type="entry name" value="Transferase(Phosphotransferase) domain 1"/>
    <property type="match status" value="1"/>
</dbReference>
<dbReference type="InterPro" id="IPR000095">
    <property type="entry name" value="CRIB_dom"/>
</dbReference>
<dbReference type="InterPro" id="IPR036936">
    <property type="entry name" value="CRIB_dom_sf"/>
</dbReference>
<dbReference type="InterPro" id="IPR011009">
    <property type="entry name" value="Kinase-like_dom_sf"/>
</dbReference>
<dbReference type="InterPro" id="IPR033923">
    <property type="entry name" value="PAK_BD"/>
</dbReference>
<dbReference type="InterPro" id="IPR000719">
    <property type="entry name" value="Prot_kinase_dom"/>
</dbReference>
<dbReference type="InterPro" id="IPR050285">
    <property type="entry name" value="STE20_Ser/Thr_kinase"/>
</dbReference>
<dbReference type="PANTHER" id="PTHR48015">
    <property type="entry name" value="SERINE/THREONINE-PROTEIN KINASE TAO"/>
    <property type="match status" value="1"/>
</dbReference>
<dbReference type="PANTHER" id="PTHR48015:SF3">
    <property type="entry name" value="SERINE_THREONINE-PROTEIN KINASE PAKA"/>
    <property type="match status" value="1"/>
</dbReference>
<dbReference type="Pfam" id="PF00786">
    <property type="entry name" value="PBD"/>
    <property type="match status" value="1"/>
</dbReference>
<dbReference type="Pfam" id="PF00069">
    <property type="entry name" value="Pkinase"/>
    <property type="match status" value="1"/>
</dbReference>
<dbReference type="SMART" id="SM00285">
    <property type="entry name" value="PBD"/>
    <property type="match status" value="1"/>
</dbReference>
<dbReference type="SMART" id="SM00220">
    <property type="entry name" value="S_TKc"/>
    <property type="match status" value="1"/>
</dbReference>
<dbReference type="SUPFAM" id="SSF56112">
    <property type="entry name" value="Protein kinase-like (PK-like)"/>
    <property type="match status" value="1"/>
</dbReference>
<dbReference type="PROSITE" id="PS50108">
    <property type="entry name" value="CRIB"/>
    <property type="match status" value="1"/>
</dbReference>
<dbReference type="PROSITE" id="PS50011">
    <property type="entry name" value="PROTEIN_KINASE_DOM"/>
    <property type="match status" value="1"/>
</dbReference>
<proteinExistence type="evidence at protein level"/>
<comment type="function">
    <text evidence="4 5">Regulator of the myosin II component of the cytoskeleton: required for regulation of cytokinesis. Functions during chemotaxis, required for maintaining the direction of cell movement, suppressing lateral pseudopod extension, and proper retraction of the posterior of chemotaxing cells.</text>
</comment>
<comment type="catalytic activity">
    <reaction>
        <text>L-seryl-[protein] + ATP = O-phospho-L-seryl-[protein] + ADP + H(+)</text>
        <dbReference type="Rhea" id="RHEA:17989"/>
        <dbReference type="Rhea" id="RHEA-COMP:9863"/>
        <dbReference type="Rhea" id="RHEA-COMP:11604"/>
        <dbReference type="ChEBI" id="CHEBI:15378"/>
        <dbReference type="ChEBI" id="CHEBI:29999"/>
        <dbReference type="ChEBI" id="CHEBI:30616"/>
        <dbReference type="ChEBI" id="CHEBI:83421"/>
        <dbReference type="ChEBI" id="CHEBI:456216"/>
        <dbReference type="EC" id="2.7.11.1"/>
    </reaction>
</comment>
<comment type="catalytic activity">
    <reaction>
        <text>L-threonyl-[protein] + ATP = O-phospho-L-threonyl-[protein] + ADP + H(+)</text>
        <dbReference type="Rhea" id="RHEA:46608"/>
        <dbReference type="Rhea" id="RHEA-COMP:11060"/>
        <dbReference type="Rhea" id="RHEA-COMP:11605"/>
        <dbReference type="ChEBI" id="CHEBI:15378"/>
        <dbReference type="ChEBI" id="CHEBI:30013"/>
        <dbReference type="ChEBI" id="CHEBI:30616"/>
        <dbReference type="ChEBI" id="CHEBI:61977"/>
        <dbReference type="ChEBI" id="CHEBI:456216"/>
        <dbReference type="EC" id="2.7.11.1"/>
    </reaction>
</comment>
<comment type="cofactor">
    <cofactor>
        <name>Mg(2+)</name>
        <dbReference type="ChEBI" id="CHEBI:18420"/>
    </cofactor>
</comment>
<comment type="subcellular location">
    <subcellularLocation>
        <location evidence="4">Cytoplasm</location>
        <location evidence="4">Cytosol</location>
    </subcellularLocation>
    <subcellularLocation>
        <location evidence="4">Cytoplasm</location>
        <location evidence="4">Cytoskeleton</location>
    </subcellularLocation>
    <text>Cytosolic in unstimulated cells, localizes to the cytoskeleton in response to chemoattractant stimulation.</text>
</comment>
<comment type="tissue specificity">
    <text evidence="4">Colocalizes with myosin II to the cleavage furrow of cells undergoing cytokinesis and the posterior cortex of polarized cells.</text>
</comment>
<comment type="PTM">
    <text evidence="5">Phosphorylation on Thr-585 results in cAMP-mediated activation and localization to the cytoskeleton.</text>
</comment>
<comment type="disruption phenotype">
    <text evidence="4">cells exhibit a defect in completing cytokinesis when grown in suspension, suggesting difficulties in regulating cytoskeletal organization required for cytokinesis, although karyokinesis is normal.</text>
</comment>
<comment type="similarity">
    <text evidence="6">Belongs to the protein kinase superfamily. STE Ser/Thr protein kinase family. STE20 subfamily.</text>
</comment>
<protein>
    <recommendedName>
        <fullName>Serine/threonine-protein kinase pakA</fullName>
        <shortName>dPAKa</shortName>
        <ecNumber>2.7.11.1</ecNumber>
    </recommendedName>
    <alternativeName>
        <fullName>dpak1</fullName>
    </alternativeName>
</protein>
<reference key="1">
    <citation type="journal article" date="1999" name="J. Cell Biol.">
        <title>PAKa, a putative PAK family member, is required for cytokinesis and the regulation of the cytoskeleton in Dictyostelium discoideum cells during chemotaxis.</title>
        <authorList>
            <person name="Chung C.Y."/>
            <person name="Firtel R.A."/>
        </authorList>
    </citation>
    <scope>NUCLEOTIDE SEQUENCE [MRNA]</scope>
    <scope>FUNCTION</scope>
    <scope>SUBCELLULAR LOCATION</scope>
    <scope>TISSUE SPECIFICITY</scope>
    <scope>DISRUPTION PHENOTYPE</scope>
    <source>
        <strain>AX3-1</strain>
    </source>
</reference>
<reference key="2">
    <citation type="submission" date="1999-10" db="EMBL/GenBank/DDBJ databases">
        <authorList>
            <person name="Mueller-Taubenberger A."/>
        </authorList>
    </citation>
    <scope>NUCLEOTIDE SEQUENCE [MRNA]</scope>
    <source>
        <strain>AX3</strain>
    </source>
</reference>
<reference key="3">
    <citation type="journal article" date="2005" name="Nature">
        <title>The genome of the social amoeba Dictyostelium discoideum.</title>
        <authorList>
            <person name="Eichinger L."/>
            <person name="Pachebat J.A."/>
            <person name="Gloeckner G."/>
            <person name="Rajandream M.A."/>
            <person name="Sucgang R."/>
            <person name="Berriman M."/>
            <person name="Song J."/>
            <person name="Olsen R."/>
            <person name="Szafranski K."/>
            <person name="Xu Q."/>
            <person name="Tunggal B."/>
            <person name="Kummerfeld S."/>
            <person name="Madera M."/>
            <person name="Konfortov B.A."/>
            <person name="Rivero F."/>
            <person name="Bankier A.T."/>
            <person name="Lehmann R."/>
            <person name="Hamlin N."/>
            <person name="Davies R."/>
            <person name="Gaudet P."/>
            <person name="Fey P."/>
            <person name="Pilcher K."/>
            <person name="Chen G."/>
            <person name="Saunders D."/>
            <person name="Sodergren E.J."/>
            <person name="Davis P."/>
            <person name="Kerhornou A."/>
            <person name="Nie X."/>
            <person name="Hall N."/>
            <person name="Anjard C."/>
            <person name="Hemphill L."/>
            <person name="Bason N."/>
            <person name="Farbrother P."/>
            <person name="Desany B."/>
            <person name="Just E."/>
            <person name="Morio T."/>
            <person name="Rost R."/>
            <person name="Churcher C.M."/>
            <person name="Cooper J."/>
            <person name="Haydock S."/>
            <person name="van Driessche N."/>
            <person name="Cronin A."/>
            <person name="Goodhead I."/>
            <person name="Muzny D.M."/>
            <person name="Mourier T."/>
            <person name="Pain A."/>
            <person name="Lu M."/>
            <person name="Harper D."/>
            <person name="Lindsay R."/>
            <person name="Hauser H."/>
            <person name="James K.D."/>
            <person name="Quiles M."/>
            <person name="Madan Babu M."/>
            <person name="Saito T."/>
            <person name="Buchrieser C."/>
            <person name="Wardroper A."/>
            <person name="Felder M."/>
            <person name="Thangavelu M."/>
            <person name="Johnson D."/>
            <person name="Knights A."/>
            <person name="Loulseged H."/>
            <person name="Mungall K.L."/>
            <person name="Oliver K."/>
            <person name="Price C."/>
            <person name="Quail M.A."/>
            <person name="Urushihara H."/>
            <person name="Hernandez J."/>
            <person name="Rabbinowitsch E."/>
            <person name="Steffen D."/>
            <person name="Sanders M."/>
            <person name="Ma J."/>
            <person name="Kohara Y."/>
            <person name="Sharp S."/>
            <person name="Simmonds M.N."/>
            <person name="Spiegler S."/>
            <person name="Tivey A."/>
            <person name="Sugano S."/>
            <person name="White B."/>
            <person name="Walker D."/>
            <person name="Woodward J.R."/>
            <person name="Winckler T."/>
            <person name="Tanaka Y."/>
            <person name="Shaulsky G."/>
            <person name="Schleicher M."/>
            <person name="Weinstock G.M."/>
            <person name="Rosenthal A."/>
            <person name="Cox E.C."/>
            <person name="Chisholm R.L."/>
            <person name="Gibbs R.A."/>
            <person name="Loomis W.F."/>
            <person name="Platzer M."/>
            <person name="Kay R.R."/>
            <person name="Williams J.G."/>
            <person name="Dear P.H."/>
            <person name="Noegel A.A."/>
            <person name="Barrell B.G."/>
            <person name="Kuspa A."/>
        </authorList>
    </citation>
    <scope>NUCLEOTIDE SEQUENCE [LARGE SCALE GENOMIC DNA]</scope>
    <source>
        <strain>AX4</strain>
    </source>
</reference>
<reference key="4">
    <citation type="journal article" date="2001" name="Mol. Cell">
        <title>Control of cell polarity and chemotaxis by Akt/PKB and PI3 kinase through the regulation of PAKa.</title>
        <authorList>
            <person name="Chung C.Y."/>
            <person name="Potikyan G."/>
            <person name="Firtel R.A."/>
        </authorList>
    </citation>
    <scope>FUNCTION</scope>
    <scope>MUTAGENESIS OF THR-585</scope>
    <scope>PHOSPHORYLATION AT THR-585</scope>
</reference>
<feature type="chain" id="PRO_0000327474" description="Serine/threonine-protein kinase pakA">
    <location>
        <begin position="1"/>
        <end position="1197"/>
    </location>
</feature>
<feature type="domain" description="CRIB" evidence="1">
    <location>
        <begin position="817"/>
        <end position="830"/>
    </location>
</feature>
<feature type="domain" description="Protein kinase" evidence="2">
    <location>
        <begin position="911"/>
        <end position="1164"/>
    </location>
</feature>
<feature type="region of interest" description="Disordered" evidence="3">
    <location>
        <begin position="1"/>
        <end position="96"/>
    </location>
</feature>
<feature type="region of interest" description="Disordered" evidence="3">
    <location>
        <begin position="328"/>
        <end position="383"/>
    </location>
</feature>
<feature type="region of interest" description="Disordered" evidence="3">
    <location>
        <begin position="430"/>
        <end position="468"/>
    </location>
</feature>
<feature type="region of interest" description="Disordered" evidence="3">
    <location>
        <begin position="485"/>
        <end position="543"/>
    </location>
</feature>
<feature type="region of interest" description="Disordered" evidence="3">
    <location>
        <begin position="562"/>
        <end position="819"/>
    </location>
</feature>
<feature type="compositionally biased region" description="Basic and acidic residues" evidence="3">
    <location>
        <begin position="19"/>
        <end position="30"/>
    </location>
</feature>
<feature type="compositionally biased region" description="Polar residues" evidence="3">
    <location>
        <begin position="34"/>
        <end position="49"/>
    </location>
</feature>
<feature type="compositionally biased region" description="Basic and acidic residues" evidence="3">
    <location>
        <begin position="51"/>
        <end position="69"/>
    </location>
</feature>
<feature type="compositionally biased region" description="Polar residues" evidence="3">
    <location>
        <begin position="70"/>
        <end position="79"/>
    </location>
</feature>
<feature type="compositionally biased region" description="Low complexity" evidence="3">
    <location>
        <begin position="80"/>
        <end position="94"/>
    </location>
</feature>
<feature type="compositionally biased region" description="Low complexity" evidence="3">
    <location>
        <begin position="346"/>
        <end position="381"/>
    </location>
</feature>
<feature type="compositionally biased region" description="Basic and acidic residues" evidence="3">
    <location>
        <begin position="439"/>
        <end position="458"/>
    </location>
</feature>
<feature type="compositionally biased region" description="Low complexity" evidence="3">
    <location>
        <begin position="494"/>
        <end position="523"/>
    </location>
</feature>
<feature type="compositionally biased region" description="Polar residues" evidence="3">
    <location>
        <begin position="524"/>
        <end position="536"/>
    </location>
</feature>
<feature type="compositionally biased region" description="Polar residues" evidence="3">
    <location>
        <begin position="593"/>
        <end position="615"/>
    </location>
</feature>
<feature type="compositionally biased region" description="Low complexity" evidence="3">
    <location>
        <begin position="636"/>
        <end position="653"/>
    </location>
</feature>
<feature type="compositionally biased region" description="Low complexity" evidence="3">
    <location>
        <begin position="671"/>
        <end position="707"/>
    </location>
</feature>
<feature type="compositionally biased region" description="Polar residues" evidence="3">
    <location>
        <begin position="718"/>
        <end position="727"/>
    </location>
</feature>
<feature type="compositionally biased region" description="Basic and acidic residues" evidence="3">
    <location>
        <begin position="728"/>
        <end position="737"/>
    </location>
</feature>
<feature type="compositionally biased region" description="Low complexity" evidence="3">
    <location>
        <begin position="739"/>
        <end position="756"/>
    </location>
</feature>
<feature type="compositionally biased region" description="Basic and acidic residues" evidence="3">
    <location>
        <begin position="757"/>
        <end position="790"/>
    </location>
</feature>
<feature type="active site" description="Proton acceptor" evidence="2">
    <location>
        <position position="1032"/>
    </location>
</feature>
<feature type="binding site" evidence="2">
    <location>
        <begin position="917"/>
        <end position="925"/>
    </location>
    <ligand>
        <name>ATP</name>
        <dbReference type="ChEBI" id="CHEBI:30616"/>
    </ligand>
</feature>
<feature type="binding site" evidence="2">
    <location>
        <position position="940"/>
    </location>
    <ligand>
        <name>ATP</name>
        <dbReference type="ChEBI" id="CHEBI:30616"/>
    </ligand>
</feature>
<feature type="modified residue" description="Phosphothreonine; by PKB" evidence="5">
    <location>
        <position position="585"/>
    </location>
</feature>
<feature type="mutagenesis site" description="Loss of phosphorylation in response to cAMP." evidence="5">
    <original>T</original>
    <variation>A</variation>
    <location>
        <position position="585"/>
    </location>
</feature>
<feature type="mutagenesis site" description="Constitutively active." evidence="5">
    <original>T</original>
    <variation>D</variation>
    <location>
        <position position="585"/>
    </location>
</feature>
<feature type="sequence conflict" description="In Ref. 1; AAD28470 and 2; AAA93038." evidence="6" ref="1 2">
    <original>K</original>
    <variation>R</variation>
    <location>
        <position position="30"/>
    </location>
</feature>
<feature type="sequence conflict" description="In Ref. 1; AAD28470." evidence="6" ref="1">
    <location>
        <begin position="48"/>
        <end position="53"/>
    </location>
</feature>
<feature type="sequence conflict" description="In Ref. 2; AAA93038." evidence="6" ref="2">
    <original>Q</original>
    <variation>H</variation>
    <location>
        <position position="231"/>
    </location>
</feature>
<feature type="sequence conflict" description="In Ref. 2; AAA93038." evidence="6" ref="2">
    <original>E</original>
    <variation>D</variation>
    <location>
        <position position="240"/>
    </location>
</feature>
<feature type="sequence conflict" description="In Ref. 2; AAA93038." evidence="6" ref="2">
    <original>NK</original>
    <variation>F</variation>
    <location>
        <begin position="379"/>
        <end position="380"/>
    </location>
</feature>
<feature type="sequence conflict" description="In Ref. 2; AAA93038." evidence="6" ref="2">
    <original>N</original>
    <variation>Y</variation>
    <location>
        <position position="392"/>
    </location>
</feature>
<feature type="sequence conflict" description="In Ref. 2; AAA93038." evidence="6" ref="2">
    <original>QR</original>
    <variation>LL</variation>
    <location>
        <begin position="466"/>
        <end position="467"/>
    </location>
</feature>
<feature type="sequence conflict" description="In Ref. 2; AAA93038." evidence="6" ref="2">
    <original>H</original>
    <variation>L</variation>
    <location>
        <position position="659"/>
    </location>
</feature>
<feature type="sequence conflict" description="In Ref. 2; AAA93038." evidence="6" ref="2">
    <original>G</original>
    <variation>S</variation>
    <location>
        <position position="1081"/>
    </location>
</feature>
<feature type="sequence conflict" description="In Ref. 2; AAA93038." evidence="6" ref="2">
    <original>D</original>
    <variation>N</variation>
    <location>
        <position position="1085"/>
    </location>
</feature>
<feature type="sequence conflict" description="In Ref. 2; AAA93038." evidence="6" ref="2">
    <original>L</original>
    <variation>H</variation>
    <location>
        <position position="1113"/>
    </location>
</feature>
<evidence type="ECO:0000255" key="1">
    <source>
        <dbReference type="PROSITE-ProRule" id="PRU00057"/>
    </source>
</evidence>
<evidence type="ECO:0000255" key="2">
    <source>
        <dbReference type="PROSITE-ProRule" id="PRU00159"/>
    </source>
</evidence>
<evidence type="ECO:0000256" key="3">
    <source>
        <dbReference type="SAM" id="MobiDB-lite"/>
    </source>
</evidence>
<evidence type="ECO:0000269" key="4">
    <source>
    </source>
</evidence>
<evidence type="ECO:0000269" key="5">
    <source>
    </source>
</evidence>
<evidence type="ECO:0000305" key="6"/>